<proteinExistence type="evidence at transcript level"/>
<comment type="function">
    <text evidence="1">May affect the rate of fibrils formation.</text>
</comment>
<comment type="subunit">
    <text evidence="1">Binds to type I and type II collagen, fibronectin and TGF-beta. Forms a ternary complex with MFAP2 and ELN. Interacts with DPT (By similarity).</text>
</comment>
<comment type="subcellular location">
    <subcellularLocation>
        <location evidence="1">Secreted</location>
        <location evidence="1">Extracellular space</location>
        <location evidence="1">Extracellular matrix</location>
    </subcellularLocation>
    <subcellularLocation>
        <location evidence="2">Secreted</location>
    </subcellularLocation>
</comment>
<comment type="PTM">
    <text evidence="1">The attached glycosaminoglycan chain can be either chondroitin sulfate or dermatan sulfate depending upon the tissue of origin.</text>
</comment>
<comment type="similarity">
    <text evidence="5">Belongs to the small leucine-rich proteoglycan (SLRP) family. SLRP class I subfamily.</text>
</comment>
<name>PGS2_RABIT</name>
<reference key="1">
    <citation type="journal article" date="1995" name="Invest. Ophthalmol. Vis. Sci.">
        <title>Cloning and in situ hybridization of rabbit decorin in corneal tissues.</title>
        <authorList>
            <person name="Zhan Q."/>
            <person name="Burrows R."/>
            <person name="Cintron C."/>
        </authorList>
    </citation>
    <scope>NUCLEOTIDE SEQUENCE [MRNA]</scope>
    <source>
        <tissue>Cornea</tissue>
    </source>
</reference>
<reference key="2">
    <citation type="submission" date="1993-11" db="EMBL/GenBank/DDBJ databases">
        <title>The primary structure of rabbit chondrocyte decorin deduced from nucleotide sequence.</title>
        <authorList>
            <person name="Hering T.M."/>
            <person name="Kollar J."/>
        </authorList>
    </citation>
    <scope>NUCLEOTIDE SEQUENCE [MRNA] OF 38-358</scope>
    <source>
        <tissue>Cartilage</tissue>
    </source>
</reference>
<evidence type="ECO:0000250" key="1"/>
<evidence type="ECO:0000250" key="2">
    <source>
        <dbReference type="UniProtKB" id="P07585"/>
    </source>
</evidence>
<evidence type="ECO:0000250" key="3">
    <source>
        <dbReference type="UniProtKB" id="Q01129"/>
    </source>
</evidence>
<evidence type="ECO:0000255" key="4"/>
<evidence type="ECO:0000305" key="5"/>
<accession>Q28888</accession>
<accession>Q28608</accession>
<keyword id="KW-1015">Disulfide bond</keyword>
<keyword id="KW-0272">Extracellular matrix</keyword>
<keyword id="KW-0325">Glycoprotein</keyword>
<keyword id="KW-0433">Leucine-rich repeat</keyword>
<keyword id="KW-0654">Proteoglycan</keyword>
<keyword id="KW-1185">Reference proteome</keyword>
<keyword id="KW-0677">Repeat</keyword>
<keyword id="KW-0964">Secreted</keyword>
<keyword id="KW-0732">Signal</keyword>
<protein>
    <recommendedName>
        <fullName>Decorin</fullName>
    </recommendedName>
    <alternativeName>
        <fullName>Bone proteoglycan II</fullName>
    </alternativeName>
    <alternativeName>
        <fullName>PG-S2</fullName>
    </alternativeName>
</protein>
<sequence>MTATLILLLLAQVSWAGPFQQRGLFDFMLEDEASGIGPDERAPELPDLDMLGPVCPFRCQCHLRVVQCSDLGLDKVPKDLPPDTTLLDLQNNKITEIKDGDFKNLKNLHALILVNNKISKISPGAFTPLVKLERLYLSKNHLKELPEKMPKSLQELRAHENEITKVRKSVFSGMNQMIVIELGTNPLKSSGIENGAFQGMKKLSYIRIADTNITTIPQGLPPSLTELHLDGNKITKIDASSLKGLNNLAKLGLSFNDISAVDNGSLANAPHLRELHLDNNKLIRVPGGLADHKYIQVVYLHNNNISVVGANDFCPPGYNTKKASYSGVSLFSNPVQYWEIQPSTFRCVYMRSAIQLGNYK</sequence>
<gene>
    <name type="primary">DCN</name>
</gene>
<dbReference type="EMBL" id="S76584">
    <property type="protein sequence ID" value="AAB33083.1"/>
    <property type="molecule type" value="mRNA"/>
</dbReference>
<dbReference type="EMBL" id="U03394">
    <property type="protein sequence ID" value="AAC04315.1"/>
    <property type="molecule type" value="mRNA"/>
</dbReference>
<dbReference type="PIR" id="I47020">
    <property type="entry name" value="I47020"/>
</dbReference>
<dbReference type="RefSeq" id="NP_001075799.1">
    <property type="nucleotide sequence ID" value="NM_001082330.1"/>
</dbReference>
<dbReference type="RefSeq" id="XP_008254943.1">
    <property type="nucleotide sequence ID" value="XM_008256721.3"/>
</dbReference>
<dbReference type="RefSeq" id="XP_008254944.1">
    <property type="nucleotide sequence ID" value="XM_008256722.4"/>
</dbReference>
<dbReference type="SMR" id="Q28888"/>
<dbReference type="FunCoup" id="Q28888">
    <property type="interactions" value="73"/>
</dbReference>
<dbReference type="STRING" id="9986.ENSOCUP00000006027"/>
<dbReference type="GlyCosmos" id="Q28888">
    <property type="glycosylation" value="4 sites, No reported glycans"/>
</dbReference>
<dbReference type="PaxDb" id="9986-ENSOCUP00000006027"/>
<dbReference type="Ensembl" id="ENSOCUT00000006967.4">
    <property type="protein sequence ID" value="ENSOCUP00000006027.3"/>
    <property type="gene ID" value="ENSOCUG00000006969.4"/>
</dbReference>
<dbReference type="GeneID" id="100009171"/>
<dbReference type="KEGG" id="ocu:100009171"/>
<dbReference type="CTD" id="1634"/>
<dbReference type="eggNOG" id="KOG0619">
    <property type="taxonomic scope" value="Eukaryota"/>
</dbReference>
<dbReference type="GeneTree" id="ENSGT00940000158382"/>
<dbReference type="HOGENOM" id="CLU_000288_186_0_1"/>
<dbReference type="InParanoid" id="Q28888"/>
<dbReference type="OMA" id="FRCIYER"/>
<dbReference type="OrthoDB" id="1111193at2759"/>
<dbReference type="Proteomes" id="UP000001811">
    <property type="component" value="Chromosome 4"/>
</dbReference>
<dbReference type="Bgee" id="ENSOCUG00000006969">
    <property type="expression patterns" value="Expressed in uterus and 17 other cell types or tissues"/>
</dbReference>
<dbReference type="GO" id="GO:0005615">
    <property type="term" value="C:extracellular space"/>
    <property type="evidence" value="ECO:0007669"/>
    <property type="project" value="TreeGrafter"/>
</dbReference>
<dbReference type="GO" id="GO:0050840">
    <property type="term" value="F:extracellular matrix binding"/>
    <property type="evidence" value="ECO:0007669"/>
    <property type="project" value="Ensembl"/>
</dbReference>
<dbReference type="GO" id="GO:0005539">
    <property type="term" value="F:glycosaminoglycan binding"/>
    <property type="evidence" value="ECO:0007669"/>
    <property type="project" value="Ensembl"/>
</dbReference>
<dbReference type="GO" id="GO:0016525">
    <property type="term" value="P:negative regulation of angiogenesis"/>
    <property type="evidence" value="ECO:0007669"/>
    <property type="project" value="Ensembl"/>
</dbReference>
<dbReference type="GO" id="GO:0010596">
    <property type="term" value="P:negative regulation of endothelial cell migration"/>
    <property type="evidence" value="ECO:0007669"/>
    <property type="project" value="Ensembl"/>
</dbReference>
<dbReference type="GO" id="GO:1900747">
    <property type="term" value="P:negative regulation of vascular endothelial growth factor signaling pathway"/>
    <property type="evidence" value="ECO:0007669"/>
    <property type="project" value="Ensembl"/>
</dbReference>
<dbReference type="GO" id="GO:0016239">
    <property type="term" value="P:positive regulation of macroautophagy"/>
    <property type="evidence" value="ECO:0007669"/>
    <property type="project" value="Ensembl"/>
</dbReference>
<dbReference type="GO" id="GO:0051901">
    <property type="term" value="P:positive regulation of mitochondrial depolarization"/>
    <property type="evidence" value="ECO:0007669"/>
    <property type="project" value="Ensembl"/>
</dbReference>
<dbReference type="GO" id="GO:0090141">
    <property type="term" value="P:positive regulation of mitochondrial fission"/>
    <property type="evidence" value="ECO:0007669"/>
    <property type="project" value="Ensembl"/>
</dbReference>
<dbReference type="GO" id="GO:0051897">
    <property type="term" value="P:positive regulation of phosphatidylinositol 3-kinase/protein kinase B signal transduction"/>
    <property type="evidence" value="ECO:0007669"/>
    <property type="project" value="Ensembl"/>
</dbReference>
<dbReference type="GO" id="GO:0045944">
    <property type="term" value="P:positive regulation of transcription by RNA polymerase II"/>
    <property type="evidence" value="ECO:0007669"/>
    <property type="project" value="Ensembl"/>
</dbReference>
<dbReference type="FunFam" id="3.80.10.10:FF:000038">
    <property type="entry name" value="Biglycan"/>
    <property type="match status" value="1"/>
</dbReference>
<dbReference type="Gene3D" id="3.80.10.10">
    <property type="entry name" value="Ribonuclease Inhibitor"/>
    <property type="match status" value="1"/>
</dbReference>
<dbReference type="InterPro" id="IPR001611">
    <property type="entry name" value="Leu-rich_rpt"/>
</dbReference>
<dbReference type="InterPro" id="IPR003591">
    <property type="entry name" value="Leu-rich_rpt_typical-subtyp"/>
</dbReference>
<dbReference type="InterPro" id="IPR032675">
    <property type="entry name" value="LRR_dom_sf"/>
</dbReference>
<dbReference type="InterPro" id="IPR000372">
    <property type="entry name" value="LRRNT"/>
</dbReference>
<dbReference type="InterPro" id="IPR050333">
    <property type="entry name" value="SLRP"/>
</dbReference>
<dbReference type="InterPro" id="IPR016352">
    <property type="entry name" value="SLRP_I_decor/aspor/byglycan"/>
</dbReference>
<dbReference type="PANTHER" id="PTHR45712">
    <property type="entry name" value="AGAP008170-PA"/>
    <property type="match status" value="1"/>
</dbReference>
<dbReference type="PANTHER" id="PTHR45712:SF14">
    <property type="entry name" value="DECORIN"/>
    <property type="match status" value="1"/>
</dbReference>
<dbReference type="Pfam" id="PF13855">
    <property type="entry name" value="LRR_8"/>
    <property type="match status" value="3"/>
</dbReference>
<dbReference type="Pfam" id="PF01462">
    <property type="entry name" value="LRRNT"/>
    <property type="match status" value="1"/>
</dbReference>
<dbReference type="PIRSF" id="PIRSF002490">
    <property type="entry name" value="SLRP_I"/>
    <property type="match status" value="1"/>
</dbReference>
<dbReference type="SMART" id="SM00364">
    <property type="entry name" value="LRR_BAC"/>
    <property type="match status" value="4"/>
</dbReference>
<dbReference type="SMART" id="SM00369">
    <property type="entry name" value="LRR_TYP"/>
    <property type="match status" value="7"/>
</dbReference>
<dbReference type="SMART" id="SM00013">
    <property type="entry name" value="LRRNT"/>
    <property type="match status" value="1"/>
</dbReference>
<dbReference type="SUPFAM" id="SSF52058">
    <property type="entry name" value="L domain-like"/>
    <property type="match status" value="1"/>
</dbReference>
<dbReference type="PROSITE" id="PS51450">
    <property type="entry name" value="LRR"/>
    <property type="match status" value="8"/>
</dbReference>
<organism>
    <name type="scientific">Oryctolagus cuniculus</name>
    <name type="common">Rabbit</name>
    <dbReference type="NCBI Taxonomy" id="9986"/>
    <lineage>
        <taxon>Eukaryota</taxon>
        <taxon>Metazoa</taxon>
        <taxon>Chordata</taxon>
        <taxon>Craniata</taxon>
        <taxon>Vertebrata</taxon>
        <taxon>Euteleostomi</taxon>
        <taxon>Mammalia</taxon>
        <taxon>Eutheria</taxon>
        <taxon>Euarchontoglires</taxon>
        <taxon>Glires</taxon>
        <taxon>Lagomorpha</taxon>
        <taxon>Leporidae</taxon>
        <taxon>Oryctolagus</taxon>
    </lineage>
</organism>
<feature type="signal peptide" evidence="3">
    <location>
        <begin position="1"/>
        <end position="16"/>
    </location>
</feature>
<feature type="propeptide" id="PRO_0000032717" evidence="3">
    <location>
        <begin position="17"/>
        <end position="30"/>
    </location>
</feature>
<feature type="chain" id="PRO_0000032718" description="Decorin">
    <location>
        <begin position="31"/>
        <end position="360"/>
    </location>
</feature>
<feature type="repeat" description="LRR 1">
    <location>
        <begin position="74"/>
        <end position="94"/>
    </location>
</feature>
<feature type="repeat" description="LRR 2">
    <location>
        <begin position="95"/>
        <end position="118"/>
    </location>
</feature>
<feature type="repeat" description="LRR 3">
    <location>
        <begin position="119"/>
        <end position="142"/>
    </location>
</feature>
<feature type="repeat" description="LRR 4">
    <location>
        <begin position="143"/>
        <end position="163"/>
    </location>
</feature>
<feature type="repeat" description="LRR 5">
    <location>
        <begin position="164"/>
        <end position="187"/>
    </location>
</feature>
<feature type="repeat" description="LRR 6">
    <location>
        <begin position="188"/>
        <end position="213"/>
    </location>
</feature>
<feature type="repeat" description="LRR 7">
    <location>
        <begin position="214"/>
        <end position="234"/>
    </location>
</feature>
<feature type="repeat" description="LRR 8">
    <location>
        <begin position="235"/>
        <end position="258"/>
    </location>
</feature>
<feature type="repeat" description="LRR 9">
    <location>
        <begin position="259"/>
        <end position="282"/>
    </location>
</feature>
<feature type="repeat" description="LRR 10">
    <location>
        <begin position="283"/>
        <end position="305"/>
    </location>
</feature>
<feature type="repeat" description="LRR 11">
    <location>
        <begin position="306"/>
        <end position="335"/>
    </location>
</feature>
<feature type="repeat" description="LRR 12">
    <location>
        <begin position="336"/>
        <end position="360"/>
    </location>
</feature>
<feature type="glycosylation site" description="O-linked (Xyl...) (glycosaminoglycan) serine" evidence="2">
    <location>
        <position position="34"/>
    </location>
</feature>
<feature type="glycosylation site" description="N-linked (GlcNAc...) asparagine" evidence="4">
    <location>
        <position position="212"/>
    </location>
</feature>
<feature type="glycosylation site" description="N-linked (GlcNAc...) asparagine" evidence="4">
    <location>
        <position position="263"/>
    </location>
</feature>
<feature type="glycosylation site" description="N-linked (GlcNAc...) asparagine" evidence="4">
    <location>
        <position position="304"/>
    </location>
</feature>
<feature type="disulfide bond" evidence="1">
    <location>
        <begin position="55"/>
        <end position="61"/>
    </location>
</feature>
<feature type="disulfide bond" evidence="1">
    <location>
        <begin position="59"/>
        <end position="68"/>
    </location>
</feature>
<feature type="disulfide bond" evidence="1">
    <location>
        <begin position="314"/>
        <end position="347"/>
    </location>
</feature>